<name>RS7_CUPPJ</name>
<protein>
    <recommendedName>
        <fullName evidence="1">Small ribosomal subunit protein uS7</fullName>
    </recommendedName>
    <alternativeName>
        <fullName evidence="2">30S ribosomal protein S7</fullName>
    </alternativeName>
</protein>
<dbReference type="EMBL" id="CP000090">
    <property type="protein sequence ID" value="AAZ62544.1"/>
    <property type="molecule type" value="Genomic_DNA"/>
</dbReference>
<dbReference type="SMR" id="Q46WD9"/>
<dbReference type="STRING" id="264198.Reut_A3184"/>
<dbReference type="KEGG" id="reu:Reut_A3184"/>
<dbReference type="eggNOG" id="COG0049">
    <property type="taxonomic scope" value="Bacteria"/>
</dbReference>
<dbReference type="HOGENOM" id="CLU_072226_1_1_4"/>
<dbReference type="OrthoDB" id="9807653at2"/>
<dbReference type="GO" id="GO:0015935">
    <property type="term" value="C:small ribosomal subunit"/>
    <property type="evidence" value="ECO:0007669"/>
    <property type="project" value="InterPro"/>
</dbReference>
<dbReference type="GO" id="GO:0019843">
    <property type="term" value="F:rRNA binding"/>
    <property type="evidence" value="ECO:0007669"/>
    <property type="project" value="UniProtKB-UniRule"/>
</dbReference>
<dbReference type="GO" id="GO:0003735">
    <property type="term" value="F:structural constituent of ribosome"/>
    <property type="evidence" value="ECO:0007669"/>
    <property type="project" value="InterPro"/>
</dbReference>
<dbReference type="GO" id="GO:0000049">
    <property type="term" value="F:tRNA binding"/>
    <property type="evidence" value="ECO:0007669"/>
    <property type="project" value="UniProtKB-UniRule"/>
</dbReference>
<dbReference type="GO" id="GO:0006412">
    <property type="term" value="P:translation"/>
    <property type="evidence" value="ECO:0007669"/>
    <property type="project" value="UniProtKB-UniRule"/>
</dbReference>
<dbReference type="CDD" id="cd14869">
    <property type="entry name" value="uS7_Bacteria"/>
    <property type="match status" value="1"/>
</dbReference>
<dbReference type="FunFam" id="1.10.455.10:FF:000001">
    <property type="entry name" value="30S ribosomal protein S7"/>
    <property type="match status" value="1"/>
</dbReference>
<dbReference type="Gene3D" id="1.10.455.10">
    <property type="entry name" value="Ribosomal protein S7 domain"/>
    <property type="match status" value="1"/>
</dbReference>
<dbReference type="HAMAP" id="MF_00480_B">
    <property type="entry name" value="Ribosomal_uS7_B"/>
    <property type="match status" value="1"/>
</dbReference>
<dbReference type="InterPro" id="IPR000235">
    <property type="entry name" value="Ribosomal_uS7"/>
</dbReference>
<dbReference type="InterPro" id="IPR005717">
    <property type="entry name" value="Ribosomal_uS7_bac/org-type"/>
</dbReference>
<dbReference type="InterPro" id="IPR020606">
    <property type="entry name" value="Ribosomal_uS7_CS"/>
</dbReference>
<dbReference type="InterPro" id="IPR023798">
    <property type="entry name" value="Ribosomal_uS7_dom"/>
</dbReference>
<dbReference type="InterPro" id="IPR036823">
    <property type="entry name" value="Ribosomal_uS7_dom_sf"/>
</dbReference>
<dbReference type="NCBIfam" id="TIGR01029">
    <property type="entry name" value="rpsG_bact"/>
    <property type="match status" value="1"/>
</dbReference>
<dbReference type="PANTHER" id="PTHR11205">
    <property type="entry name" value="RIBOSOMAL PROTEIN S7"/>
    <property type="match status" value="1"/>
</dbReference>
<dbReference type="Pfam" id="PF00177">
    <property type="entry name" value="Ribosomal_S7"/>
    <property type="match status" value="1"/>
</dbReference>
<dbReference type="PIRSF" id="PIRSF002122">
    <property type="entry name" value="RPS7p_RPS7a_RPS5e_RPS7o"/>
    <property type="match status" value="1"/>
</dbReference>
<dbReference type="SUPFAM" id="SSF47973">
    <property type="entry name" value="Ribosomal protein S7"/>
    <property type="match status" value="1"/>
</dbReference>
<dbReference type="PROSITE" id="PS00052">
    <property type="entry name" value="RIBOSOMAL_S7"/>
    <property type="match status" value="1"/>
</dbReference>
<evidence type="ECO:0000255" key="1">
    <source>
        <dbReference type="HAMAP-Rule" id="MF_00480"/>
    </source>
</evidence>
<evidence type="ECO:0000305" key="2"/>
<proteinExistence type="inferred from homology"/>
<accession>Q46WD9</accession>
<organism>
    <name type="scientific">Cupriavidus pinatubonensis (strain JMP 134 / LMG 1197)</name>
    <name type="common">Cupriavidus necator (strain JMP 134)</name>
    <dbReference type="NCBI Taxonomy" id="264198"/>
    <lineage>
        <taxon>Bacteria</taxon>
        <taxon>Pseudomonadati</taxon>
        <taxon>Pseudomonadota</taxon>
        <taxon>Betaproteobacteria</taxon>
        <taxon>Burkholderiales</taxon>
        <taxon>Burkholderiaceae</taxon>
        <taxon>Cupriavidus</taxon>
    </lineage>
</organism>
<feature type="chain" id="PRO_0000226522" description="Small ribosomal subunit protein uS7">
    <location>
        <begin position="1"/>
        <end position="156"/>
    </location>
</feature>
<comment type="function">
    <text evidence="1">One of the primary rRNA binding proteins, it binds directly to 16S rRNA where it nucleates assembly of the head domain of the 30S subunit. Is located at the subunit interface close to the decoding center, probably blocks exit of the E-site tRNA.</text>
</comment>
<comment type="subunit">
    <text evidence="1">Part of the 30S ribosomal subunit. Contacts proteins S9 and S11.</text>
</comment>
<comment type="similarity">
    <text evidence="1">Belongs to the universal ribosomal protein uS7 family.</text>
</comment>
<keyword id="KW-0687">Ribonucleoprotein</keyword>
<keyword id="KW-0689">Ribosomal protein</keyword>
<keyword id="KW-0694">RNA-binding</keyword>
<keyword id="KW-0699">rRNA-binding</keyword>
<keyword id="KW-0820">tRNA-binding</keyword>
<reference key="1">
    <citation type="journal article" date="2010" name="PLoS ONE">
        <title>The complete multipartite genome sequence of Cupriavidus necator JMP134, a versatile pollutant degrader.</title>
        <authorList>
            <person name="Lykidis A."/>
            <person name="Perez-Pantoja D."/>
            <person name="Ledger T."/>
            <person name="Mavromatis K."/>
            <person name="Anderson I.J."/>
            <person name="Ivanova N.N."/>
            <person name="Hooper S.D."/>
            <person name="Lapidus A."/>
            <person name="Lucas S."/>
            <person name="Gonzalez B."/>
            <person name="Kyrpides N.C."/>
        </authorList>
    </citation>
    <scope>NUCLEOTIDE SEQUENCE [LARGE SCALE GENOMIC DNA]</scope>
    <source>
        <strain>JMP134 / LMG 1197</strain>
    </source>
</reference>
<sequence length="156" mass="17632">MPRRREVPKRDVLPDPKFGNVEVAKFMNVLMLDGKKSVAERIVYGAFDQIEKKAGKAPIEVFSVAINNVKPVVEVKSRRVGGANYQVPVEVRPSRRLALAMRWLREAAKKRSEKSMALRLAGELLEASEGRGGAMKKRDEVHRMAEANKAFSHFRF</sequence>
<gene>
    <name evidence="1" type="primary">rpsG</name>
    <name type="ordered locus">Reut_A3184</name>
</gene>